<protein>
    <recommendedName>
        <fullName evidence="1">Glutamate--tRNA ligase</fullName>
        <ecNumber evidence="1">6.1.1.17</ecNumber>
    </recommendedName>
    <alternativeName>
        <fullName evidence="1">Glutamyl-tRNA synthetase</fullName>
        <shortName evidence="1">GluRS</shortName>
    </alternativeName>
</protein>
<reference key="1">
    <citation type="journal article" date="2005" name="J. Bacteriol.">
        <title>Swine and poultry pathogens: the complete genome sequences of two strains of Mycoplasma hyopneumoniae and a strain of Mycoplasma synoviae.</title>
        <authorList>
            <person name="Vasconcelos A.T.R."/>
            <person name="Ferreira H.B."/>
            <person name="Bizarro C.V."/>
            <person name="Bonatto S.L."/>
            <person name="Carvalho M.O."/>
            <person name="Pinto P.M."/>
            <person name="Almeida D.F."/>
            <person name="Almeida L.G.P."/>
            <person name="Almeida R."/>
            <person name="Alves-Junior L."/>
            <person name="Assuncao E.N."/>
            <person name="Azevedo V.A.C."/>
            <person name="Bogo M.R."/>
            <person name="Brigido M.M."/>
            <person name="Brocchi M."/>
            <person name="Burity H.A."/>
            <person name="Camargo A.A."/>
            <person name="Camargo S.S."/>
            <person name="Carepo M.S."/>
            <person name="Carraro D.M."/>
            <person name="de Mattos Cascardo J.C."/>
            <person name="Castro L.A."/>
            <person name="Cavalcanti G."/>
            <person name="Chemale G."/>
            <person name="Collevatti R.G."/>
            <person name="Cunha C.W."/>
            <person name="Dallagiovanna B."/>
            <person name="Dambros B.P."/>
            <person name="Dellagostin O.A."/>
            <person name="Falcao C."/>
            <person name="Fantinatti-Garboggini F."/>
            <person name="Felipe M.S.S."/>
            <person name="Fiorentin L."/>
            <person name="Franco G.R."/>
            <person name="Freitas N.S.A."/>
            <person name="Frias D."/>
            <person name="Grangeiro T.B."/>
            <person name="Grisard E.C."/>
            <person name="Guimaraes C.T."/>
            <person name="Hungria M."/>
            <person name="Jardim S.N."/>
            <person name="Krieger M.A."/>
            <person name="Laurino J.P."/>
            <person name="Lima L.F.A."/>
            <person name="Lopes M.I."/>
            <person name="Loreto E.L.S."/>
            <person name="Madeira H.M.F."/>
            <person name="Manfio G.P."/>
            <person name="Maranhao A.Q."/>
            <person name="Martinkovics C.T."/>
            <person name="Medeiros S.R.B."/>
            <person name="Moreira M.A.M."/>
            <person name="Neiva M."/>
            <person name="Ramalho-Neto C.E."/>
            <person name="Nicolas M.F."/>
            <person name="Oliveira S.C."/>
            <person name="Paixao R.F.C."/>
            <person name="Pedrosa F.O."/>
            <person name="Pena S.D.J."/>
            <person name="Pereira M."/>
            <person name="Pereira-Ferrari L."/>
            <person name="Piffer I."/>
            <person name="Pinto L.S."/>
            <person name="Potrich D.P."/>
            <person name="Salim A.C.M."/>
            <person name="Santos F.R."/>
            <person name="Schmitt R."/>
            <person name="Schneider M.P.C."/>
            <person name="Schrank A."/>
            <person name="Schrank I.S."/>
            <person name="Schuck A.F."/>
            <person name="Seuanez H.N."/>
            <person name="Silva D.W."/>
            <person name="Silva R."/>
            <person name="Silva S.C."/>
            <person name="Soares C.M.A."/>
            <person name="Souza K.R.L."/>
            <person name="Souza R.C."/>
            <person name="Staats C.C."/>
            <person name="Steffens M.B.R."/>
            <person name="Teixeira S.M.R."/>
            <person name="Urmenyi T.P."/>
            <person name="Vainstein M.H."/>
            <person name="Zuccherato L.W."/>
            <person name="Simpson A.J.G."/>
            <person name="Zaha A."/>
        </authorList>
    </citation>
    <scope>NUCLEOTIDE SEQUENCE [LARGE SCALE GENOMIC DNA]</scope>
    <source>
        <strain>J / ATCC 25934 / NCTC 10110</strain>
    </source>
</reference>
<keyword id="KW-0030">Aminoacyl-tRNA synthetase</keyword>
<keyword id="KW-0067">ATP-binding</keyword>
<keyword id="KW-0963">Cytoplasm</keyword>
<keyword id="KW-0436">Ligase</keyword>
<keyword id="KW-0547">Nucleotide-binding</keyword>
<keyword id="KW-0648">Protein biosynthesis</keyword>
<sequence>MKIRTRYAPSPTGFLHIGGARTALFNYLFAKHHNGDFILRIEDSDNSRNIKDGEKSQIENLLWLGIIPDEKPGSETKFGPYRQSEKLERYQKLAQELIKKGFAYYAFDNQEELKLQKKEQIAKGIFSFRYDQNWLKISDQEKQKRLKNKHFVIRFKVDKAKNFCWNDLVRGQICFEGSAISDWVIIKSDGFPTYNFAVVVDDFDMEISHIFRGEEHISNTPKQIGIYQAFNWKTPKFGHLTIITDKNGKKLSKRDKNLFQFIEDYKNQGYHSEAFFNFLALLGWTSPDSQEFFDHKSLIKAFDYKRLSKAPSHFDIEKLNWFSKSYISKMPVDKILENLELSDNQIWNRFFVETFQKSSIKYADFYKNFEFFHRPKQEMDEKMLEIFEKLDKKPVKIFASKIDYQNWDYTKINDLIKEIGQKLEITGKNLLLPIRLATTFTNSGPELARAIWLLGKKIIEKRLLKWK</sequence>
<dbReference type="EC" id="6.1.1.17" evidence="1"/>
<dbReference type="EMBL" id="AE017243">
    <property type="protein sequence ID" value="AAZ44228.2"/>
    <property type="molecule type" value="Genomic_DNA"/>
</dbReference>
<dbReference type="RefSeq" id="WP_044284591.1">
    <property type="nucleotide sequence ID" value="NC_007295.1"/>
</dbReference>
<dbReference type="SMR" id="Q4AAJ3"/>
<dbReference type="GeneID" id="41334439"/>
<dbReference type="KEGG" id="mhj:MHJ_0137"/>
<dbReference type="eggNOG" id="COG0008">
    <property type="taxonomic scope" value="Bacteria"/>
</dbReference>
<dbReference type="HOGENOM" id="CLU_015768_6_1_14"/>
<dbReference type="OrthoDB" id="9807503at2"/>
<dbReference type="Proteomes" id="UP000000548">
    <property type="component" value="Chromosome"/>
</dbReference>
<dbReference type="GO" id="GO:0005829">
    <property type="term" value="C:cytosol"/>
    <property type="evidence" value="ECO:0007669"/>
    <property type="project" value="TreeGrafter"/>
</dbReference>
<dbReference type="GO" id="GO:0005524">
    <property type="term" value="F:ATP binding"/>
    <property type="evidence" value="ECO:0007669"/>
    <property type="project" value="UniProtKB-UniRule"/>
</dbReference>
<dbReference type="GO" id="GO:0004818">
    <property type="term" value="F:glutamate-tRNA ligase activity"/>
    <property type="evidence" value="ECO:0007669"/>
    <property type="project" value="UniProtKB-UniRule"/>
</dbReference>
<dbReference type="GO" id="GO:0000049">
    <property type="term" value="F:tRNA binding"/>
    <property type="evidence" value="ECO:0007669"/>
    <property type="project" value="InterPro"/>
</dbReference>
<dbReference type="GO" id="GO:0008270">
    <property type="term" value="F:zinc ion binding"/>
    <property type="evidence" value="ECO:0007669"/>
    <property type="project" value="InterPro"/>
</dbReference>
<dbReference type="GO" id="GO:0006424">
    <property type="term" value="P:glutamyl-tRNA aminoacylation"/>
    <property type="evidence" value="ECO:0007669"/>
    <property type="project" value="UniProtKB-UniRule"/>
</dbReference>
<dbReference type="CDD" id="cd00808">
    <property type="entry name" value="GluRS_core"/>
    <property type="match status" value="1"/>
</dbReference>
<dbReference type="FunFam" id="3.40.50.620:FF:000007">
    <property type="entry name" value="Glutamate--tRNA ligase"/>
    <property type="match status" value="1"/>
</dbReference>
<dbReference type="Gene3D" id="1.10.10.350">
    <property type="match status" value="1"/>
</dbReference>
<dbReference type="Gene3D" id="3.40.50.620">
    <property type="entry name" value="HUPs"/>
    <property type="match status" value="1"/>
</dbReference>
<dbReference type="HAMAP" id="MF_00022">
    <property type="entry name" value="Glu_tRNA_synth_type1"/>
    <property type="match status" value="1"/>
</dbReference>
<dbReference type="InterPro" id="IPR045462">
    <property type="entry name" value="aa-tRNA-synth_I_cd-bd"/>
</dbReference>
<dbReference type="InterPro" id="IPR020751">
    <property type="entry name" value="aa-tRNA-synth_I_codon-bd_sub2"/>
</dbReference>
<dbReference type="InterPro" id="IPR001412">
    <property type="entry name" value="aa-tRNA-synth_I_CS"/>
</dbReference>
<dbReference type="InterPro" id="IPR008925">
    <property type="entry name" value="aa_tRNA-synth_I_cd-bd_sf"/>
</dbReference>
<dbReference type="InterPro" id="IPR004527">
    <property type="entry name" value="Glu-tRNA-ligase_bac/mito"/>
</dbReference>
<dbReference type="InterPro" id="IPR000924">
    <property type="entry name" value="Glu/Gln-tRNA-synth"/>
</dbReference>
<dbReference type="InterPro" id="IPR020058">
    <property type="entry name" value="Glu/Gln-tRNA-synth_Ib_cat-dom"/>
</dbReference>
<dbReference type="InterPro" id="IPR049940">
    <property type="entry name" value="GluQ/Sye"/>
</dbReference>
<dbReference type="InterPro" id="IPR033910">
    <property type="entry name" value="GluRS_core"/>
</dbReference>
<dbReference type="InterPro" id="IPR014729">
    <property type="entry name" value="Rossmann-like_a/b/a_fold"/>
</dbReference>
<dbReference type="NCBIfam" id="TIGR00464">
    <property type="entry name" value="gltX_bact"/>
    <property type="match status" value="1"/>
</dbReference>
<dbReference type="PANTHER" id="PTHR43311">
    <property type="entry name" value="GLUTAMATE--TRNA LIGASE"/>
    <property type="match status" value="1"/>
</dbReference>
<dbReference type="PANTHER" id="PTHR43311:SF2">
    <property type="entry name" value="GLUTAMATE--TRNA LIGASE, MITOCHONDRIAL-RELATED"/>
    <property type="match status" value="1"/>
</dbReference>
<dbReference type="Pfam" id="PF19269">
    <property type="entry name" value="Anticodon_2"/>
    <property type="match status" value="1"/>
</dbReference>
<dbReference type="Pfam" id="PF00749">
    <property type="entry name" value="tRNA-synt_1c"/>
    <property type="match status" value="1"/>
</dbReference>
<dbReference type="PRINTS" id="PR00987">
    <property type="entry name" value="TRNASYNTHGLU"/>
</dbReference>
<dbReference type="SUPFAM" id="SSF48163">
    <property type="entry name" value="An anticodon-binding domain of class I aminoacyl-tRNA synthetases"/>
    <property type="match status" value="1"/>
</dbReference>
<dbReference type="SUPFAM" id="SSF52374">
    <property type="entry name" value="Nucleotidylyl transferase"/>
    <property type="match status" value="1"/>
</dbReference>
<dbReference type="PROSITE" id="PS00178">
    <property type="entry name" value="AA_TRNA_LIGASE_I"/>
    <property type="match status" value="1"/>
</dbReference>
<evidence type="ECO:0000255" key="1">
    <source>
        <dbReference type="HAMAP-Rule" id="MF_00022"/>
    </source>
</evidence>
<feature type="chain" id="PRO_0000237373" description="Glutamate--tRNA ligase">
    <location>
        <begin position="1"/>
        <end position="467"/>
    </location>
</feature>
<feature type="short sequence motif" description="'HIGH' region" evidence="1">
    <location>
        <begin position="9"/>
        <end position="19"/>
    </location>
</feature>
<feature type="short sequence motif" description="'KMSKS' region" evidence="1">
    <location>
        <begin position="250"/>
        <end position="254"/>
    </location>
</feature>
<feature type="binding site" evidence="1">
    <location>
        <position position="253"/>
    </location>
    <ligand>
        <name>ATP</name>
        <dbReference type="ChEBI" id="CHEBI:30616"/>
    </ligand>
</feature>
<name>SYE_MESHJ</name>
<proteinExistence type="inferred from homology"/>
<accession>Q4AAJ3</accession>
<organism>
    <name type="scientific">Mesomycoplasma hyopneumoniae (strain J / ATCC 25934 / NCTC 10110)</name>
    <name type="common">Mycoplasma hyopneumoniae</name>
    <dbReference type="NCBI Taxonomy" id="262719"/>
    <lineage>
        <taxon>Bacteria</taxon>
        <taxon>Bacillati</taxon>
        <taxon>Mycoplasmatota</taxon>
        <taxon>Mycoplasmoidales</taxon>
        <taxon>Metamycoplasmataceae</taxon>
        <taxon>Mesomycoplasma</taxon>
    </lineage>
</organism>
<gene>
    <name evidence="1" type="primary">gltX</name>
    <name type="ordered locus">MHJ_0137</name>
</gene>
<comment type="function">
    <text evidence="1">Catalyzes the attachment of glutamate to tRNA(Glu) in a two-step reaction: glutamate is first activated by ATP to form Glu-AMP and then transferred to the acceptor end of tRNA(Glu).</text>
</comment>
<comment type="catalytic activity">
    <reaction evidence="1">
        <text>tRNA(Glu) + L-glutamate + ATP = L-glutamyl-tRNA(Glu) + AMP + diphosphate</text>
        <dbReference type="Rhea" id="RHEA:23540"/>
        <dbReference type="Rhea" id="RHEA-COMP:9663"/>
        <dbReference type="Rhea" id="RHEA-COMP:9680"/>
        <dbReference type="ChEBI" id="CHEBI:29985"/>
        <dbReference type="ChEBI" id="CHEBI:30616"/>
        <dbReference type="ChEBI" id="CHEBI:33019"/>
        <dbReference type="ChEBI" id="CHEBI:78442"/>
        <dbReference type="ChEBI" id="CHEBI:78520"/>
        <dbReference type="ChEBI" id="CHEBI:456215"/>
        <dbReference type="EC" id="6.1.1.17"/>
    </reaction>
</comment>
<comment type="subunit">
    <text evidence="1">Monomer.</text>
</comment>
<comment type="subcellular location">
    <subcellularLocation>
        <location evidence="1">Cytoplasm</location>
    </subcellularLocation>
</comment>
<comment type="similarity">
    <text evidence="1">Belongs to the class-I aminoacyl-tRNA synthetase family. Glutamate--tRNA ligase type 1 subfamily.</text>
</comment>